<organism>
    <name type="scientific">Escherichia coli (strain K12)</name>
    <dbReference type="NCBI Taxonomy" id="83333"/>
    <lineage>
        <taxon>Bacteria</taxon>
        <taxon>Pseudomonadati</taxon>
        <taxon>Pseudomonadota</taxon>
        <taxon>Gammaproteobacteria</taxon>
        <taxon>Enterobacterales</taxon>
        <taxon>Enterobacteriaceae</taxon>
        <taxon>Escherichia</taxon>
    </lineage>
</organism>
<feature type="chain" id="PRO_0000194508" description="Porin thermoregulatory protein EnvY">
    <location>
        <begin position="1"/>
        <end position="253"/>
    </location>
</feature>
<feature type="domain" description="HTH araC/xylS-type" evidence="1">
    <location>
        <begin position="149"/>
        <end position="246"/>
    </location>
</feature>
<feature type="DNA-binding region" description="H-T-H motif" evidence="1">
    <location>
        <begin position="166"/>
        <end position="187"/>
    </location>
</feature>
<feature type="DNA-binding region" description="H-T-H motif" evidence="1">
    <location>
        <begin position="213"/>
        <end position="236"/>
    </location>
</feature>
<feature type="sequence conflict" description="In Ref. 1; CAA31900." evidence="2" ref="1">
    <original>N</original>
    <variation>NR</variation>
    <location>
        <position position="61"/>
    </location>
</feature>
<feature type="sequence conflict" description="In Ref. 1; CAA31900." evidence="2" ref="1">
    <location>
        <position position="93"/>
    </location>
</feature>
<feature type="sequence conflict" description="In Ref. 1; CAA31900." evidence="2" ref="1">
    <original>R</original>
    <variation>P</variation>
    <location>
        <position position="99"/>
    </location>
</feature>
<feature type="sequence conflict" description="In Ref. 1; CAA31900." evidence="2" ref="1">
    <original>S</original>
    <variation>T</variation>
    <location>
        <position position="150"/>
    </location>
</feature>
<evidence type="ECO:0000255" key="1">
    <source>
        <dbReference type="PROSITE-ProRule" id="PRU00593"/>
    </source>
</evidence>
<evidence type="ECO:0000305" key="2"/>
<name>ENVY_ECOLI</name>
<dbReference type="EMBL" id="X13548">
    <property type="protein sequence ID" value="CAA31900.1"/>
    <property type="molecule type" value="Genomic_DNA"/>
</dbReference>
<dbReference type="EMBL" id="U82598">
    <property type="protein sequence ID" value="AAB40763.1"/>
    <property type="molecule type" value="Genomic_DNA"/>
</dbReference>
<dbReference type="EMBL" id="U00096">
    <property type="protein sequence ID" value="AAC73667.1"/>
    <property type="molecule type" value="Genomic_DNA"/>
</dbReference>
<dbReference type="EMBL" id="AP009048">
    <property type="protein sequence ID" value="BAA35200.1"/>
    <property type="molecule type" value="Genomic_DNA"/>
</dbReference>
<dbReference type="PIR" id="D64789">
    <property type="entry name" value="D64789"/>
</dbReference>
<dbReference type="RefSeq" id="NP_415098.1">
    <property type="nucleotide sequence ID" value="NC_000913.3"/>
</dbReference>
<dbReference type="RefSeq" id="WP_001177471.1">
    <property type="nucleotide sequence ID" value="NZ_SSZK01000024.1"/>
</dbReference>
<dbReference type="SMR" id="P10805"/>
<dbReference type="BioGRID" id="4262188">
    <property type="interactions" value="87"/>
</dbReference>
<dbReference type="FunCoup" id="P10805">
    <property type="interactions" value="40"/>
</dbReference>
<dbReference type="IntAct" id="P10805">
    <property type="interactions" value="14"/>
</dbReference>
<dbReference type="STRING" id="511145.b0566"/>
<dbReference type="PaxDb" id="511145-b0566"/>
<dbReference type="EnsemblBacteria" id="AAC73667">
    <property type="protein sequence ID" value="AAC73667"/>
    <property type="gene ID" value="b0566"/>
</dbReference>
<dbReference type="GeneID" id="949114"/>
<dbReference type="KEGG" id="ecj:JW0555"/>
<dbReference type="KEGG" id="eco:b0566"/>
<dbReference type="KEGG" id="ecoc:C3026_02810"/>
<dbReference type="PATRIC" id="fig|1411691.4.peg.1708"/>
<dbReference type="EchoBASE" id="EB0264"/>
<dbReference type="eggNOG" id="COG2207">
    <property type="taxonomic scope" value="Bacteria"/>
</dbReference>
<dbReference type="HOGENOM" id="CLU_000445_81_4_6"/>
<dbReference type="InParanoid" id="P10805"/>
<dbReference type="OMA" id="HISMEVI"/>
<dbReference type="OrthoDB" id="9816344at2"/>
<dbReference type="PhylomeDB" id="P10805"/>
<dbReference type="BioCyc" id="EcoCyc:PD00969"/>
<dbReference type="PRO" id="PR:P10805"/>
<dbReference type="Proteomes" id="UP000000625">
    <property type="component" value="Chromosome"/>
</dbReference>
<dbReference type="GO" id="GO:0016020">
    <property type="term" value="C:membrane"/>
    <property type="evidence" value="ECO:0000314"/>
    <property type="project" value="EcoCyc"/>
</dbReference>
<dbReference type="GO" id="GO:0003700">
    <property type="term" value="F:DNA-binding transcription factor activity"/>
    <property type="evidence" value="ECO:0007669"/>
    <property type="project" value="InterPro"/>
</dbReference>
<dbReference type="GO" id="GO:0043565">
    <property type="term" value="F:sequence-specific DNA binding"/>
    <property type="evidence" value="ECO:0007669"/>
    <property type="project" value="InterPro"/>
</dbReference>
<dbReference type="GO" id="GO:0009266">
    <property type="term" value="P:response to temperature stimulus"/>
    <property type="evidence" value="ECO:0000314"/>
    <property type="project" value="EcoCyc"/>
</dbReference>
<dbReference type="Gene3D" id="1.10.10.60">
    <property type="entry name" value="Homeodomain-like"/>
    <property type="match status" value="1"/>
</dbReference>
<dbReference type="InterPro" id="IPR009057">
    <property type="entry name" value="Homeodomain-like_sf"/>
</dbReference>
<dbReference type="InterPro" id="IPR018060">
    <property type="entry name" value="HTH_AraC"/>
</dbReference>
<dbReference type="InterPro" id="IPR018062">
    <property type="entry name" value="HTH_AraC-typ_CS"/>
</dbReference>
<dbReference type="InterPro" id="IPR020449">
    <property type="entry name" value="Tscrpt_reg_AraC-type_HTH"/>
</dbReference>
<dbReference type="PANTHER" id="PTHR47894">
    <property type="entry name" value="HTH-TYPE TRANSCRIPTIONAL REGULATOR GADX"/>
    <property type="match status" value="1"/>
</dbReference>
<dbReference type="PANTHER" id="PTHR47894:SF4">
    <property type="entry name" value="HTH-TYPE TRANSCRIPTIONAL REGULATOR GADX"/>
    <property type="match status" value="1"/>
</dbReference>
<dbReference type="Pfam" id="PF12833">
    <property type="entry name" value="HTH_18"/>
    <property type="match status" value="1"/>
</dbReference>
<dbReference type="PRINTS" id="PR00032">
    <property type="entry name" value="HTHARAC"/>
</dbReference>
<dbReference type="SMART" id="SM00342">
    <property type="entry name" value="HTH_ARAC"/>
    <property type="match status" value="1"/>
</dbReference>
<dbReference type="SUPFAM" id="SSF46689">
    <property type="entry name" value="Homeodomain-like"/>
    <property type="match status" value="1"/>
</dbReference>
<dbReference type="PROSITE" id="PS00041">
    <property type="entry name" value="HTH_ARAC_FAMILY_1"/>
    <property type="match status" value="1"/>
</dbReference>
<dbReference type="PROSITE" id="PS01124">
    <property type="entry name" value="HTH_ARAC_FAMILY_2"/>
    <property type="match status" value="1"/>
</dbReference>
<reference key="1">
    <citation type="journal article" date="1989" name="Nucleic Acids Res.">
        <title>Nucleotide sequence of the Escherichia coli porin thermoregulatory gene envY.</title>
        <authorList>
            <person name="Lundrigan M.D."/>
            <person name="Friedrich M.J."/>
            <person name="Kadner R.J."/>
        </authorList>
    </citation>
    <scope>NUCLEOTIDE SEQUENCE [GENOMIC DNA]</scope>
</reference>
<reference key="2">
    <citation type="journal article" date="1996" name="DNA Res.">
        <title>A 718-kb DNA sequence of the Escherichia coli K-12 genome corresponding to the 12.7-28.0 min region on the linkage map.</title>
        <authorList>
            <person name="Oshima T."/>
            <person name="Aiba H."/>
            <person name="Baba T."/>
            <person name="Fujita K."/>
            <person name="Hayashi K."/>
            <person name="Honjo A."/>
            <person name="Ikemoto K."/>
            <person name="Inada T."/>
            <person name="Itoh T."/>
            <person name="Kajihara M."/>
            <person name="Kanai K."/>
            <person name="Kashimoto K."/>
            <person name="Kimura S."/>
            <person name="Kitagawa M."/>
            <person name="Makino K."/>
            <person name="Masuda S."/>
            <person name="Miki T."/>
            <person name="Mizobuchi K."/>
            <person name="Mori H."/>
            <person name="Motomura K."/>
            <person name="Nakamura Y."/>
            <person name="Nashimoto H."/>
            <person name="Nishio Y."/>
            <person name="Saito N."/>
            <person name="Sampei G."/>
            <person name="Seki Y."/>
            <person name="Tagami H."/>
            <person name="Takemoto K."/>
            <person name="Wada C."/>
            <person name="Yamamoto Y."/>
            <person name="Yano M."/>
            <person name="Horiuchi T."/>
        </authorList>
    </citation>
    <scope>NUCLEOTIDE SEQUENCE [LARGE SCALE GENOMIC DNA]</scope>
    <source>
        <strain>K12 / W3110 / ATCC 27325 / DSM 5911</strain>
    </source>
</reference>
<reference key="3">
    <citation type="submission" date="1997-01" db="EMBL/GenBank/DDBJ databases">
        <title>Sequence of minutes 4-25 of Escherichia coli.</title>
        <authorList>
            <person name="Chung E."/>
            <person name="Allen E."/>
            <person name="Araujo R."/>
            <person name="Aparicio A.M."/>
            <person name="Davis K."/>
            <person name="Duncan M."/>
            <person name="Federspiel N."/>
            <person name="Hyman R."/>
            <person name="Kalman S."/>
            <person name="Komp C."/>
            <person name="Kurdi O."/>
            <person name="Lew H."/>
            <person name="Lin D."/>
            <person name="Namath A."/>
            <person name="Oefner P."/>
            <person name="Roberts D."/>
            <person name="Schramm S."/>
            <person name="Davis R.W."/>
        </authorList>
    </citation>
    <scope>NUCLEOTIDE SEQUENCE [LARGE SCALE GENOMIC DNA]</scope>
    <source>
        <strain>K12 / MG1655 / ATCC 47076</strain>
    </source>
</reference>
<reference key="4">
    <citation type="journal article" date="1997" name="Science">
        <title>The complete genome sequence of Escherichia coli K-12.</title>
        <authorList>
            <person name="Blattner F.R."/>
            <person name="Plunkett G. III"/>
            <person name="Bloch C.A."/>
            <person name="Perna N.T."/>
            <person name="Burland V."/>
            <person name="Riley M."/>
            <person name="Collado-Vides J."/>
            <person name="Glasner J.D."/>
            <person name="Rode C.K."/>
            <person name="Mayhew G.F."/>
            <person name="Gregor J."/>
            <person name="Davis N.W."/>
            <person name="Kirkpatrick H.A."/>
            <person name="Goeden M.A."/>
            <person name="Rose D.J."/>
            <person name="Mau B."/>
            <person name="Shao Y."/>
        </authorList>
    </citation>
    <scope>NUCLEOTIDE SEQUENCE [LARGE SCALE GENOMIC DNA]</scope>
    <source>
        <strain>K12 / MG1655 / ATCC 47076</strain>
    </source>
</reference>
<reference key="5">
    <citation type="journal article" date="2006" name="Mol. Syst. Biol.">
        <title>Highly accurate genome sequences of Escherichia coli K-12 strains MG1655 and W3110.</title>
        <authorList>
            <person name="Hayashi K."/>
            <person name="Morooka N."/>
            <person name="Yamamoto Y."/>
            <person name="Fujita K."/>
            <person name="Isono K."/>
            <person name="Choi S."/>
            <person name="Ohtsubo E."/>
            <person name="Baba T."/>
            <person name="Wanner B.L."/>
            <person name="Mori H."/>
            <person name="Horiuchi T."/>
        </authorList>
    </citation>
    <scope>NUCLEOTIDE SEQUENCE [LARGE SCALE GENOMIC DNA]</scope>
    <source>
        <strain>K12 / W3110 / ATCC 27325 / DSM 5911</strain>
    </source>
</reference>
<protein>
    <recommendedName>
        <fullName>Porin thermoregulatory protein EnvY</fullName>
    </recommendedName>
</protein>
<proteinExistence type="predicted"/>
<sequence>MQLSSSEPCVVILTEKEVEVSVNNHATFTLPKNYLAAFACNNNVIELSTLNHVLITHINRNIINDYLLFLNKNLTCVKPWSRLATPVIACHSRTPEVFRLAANHSKQQPSRPCEAELTRALLFTVLSNFLEQSRFIALLMYILRSSVRDSVCRIIQSDIQHYWNLRIVASSLCLSPSLLKKKLKNENTSYSQIVTECRMRYAVQMLLMDNKNITQVAQLCGYSSTSYFISVFKAFYGLTPLNYLAKQRQKVMW</sequence>
<keyword id="KW-0010">Activator</keyword>
<keyword id="KW-0238">DNA-binding</keyword>
<keyword id="KW-1185">Reference proteome</keyword>
<keyword id="KW-0804">Transcription</keyword>
<keyword id="KW-0805">Transcription regulation</keyword>
<gene>
    <name type="primary">envY</name>
    <name type="ordered locus">b0566</name>
    <name type="ordered locus">JW0555</name>
</gene>
<comment type="function">
    <text>Influences the temperature-dependent expression of several E.coli envelope proteins, most notably the porins OmpF and OmpC and the lambda receptor, LamB.</text>
</comment>
<accession>P10805</accession>
<accession>P77778</accession>